<evidence type="ECO:0000250" key="1"/>
<evidence type="ECO:0000255" key="2"/>
<evidence type="ECO:0000305" key="3"/>
<dbReference type="EMBL" id="DS499596">
    <property type="protein sequence ID" value="EDP52687.1"/>
    <property type="molecule type" value="Genomic_DNA"/>
</dbReference>
<dbReference type="GlyCosmos" id="B0XXU1">
    <property type="glycosylation" value="1 site, No reported glycans"/>
</dbReference>
<dbReference type="EnsemblFungi" id="EDP52687">
    <property type="protein sequence ID" value="EDP52687"/>
    <property type="gene ID" value="AFUB_038560"/>
</dbReference>
<dbReference type="VEuPathDB" id="FungiDB:AFUB_038560"/>
<dbReference type="HOGENOM" id="CLU_118698_0_0_1"/>
<dbReference type="OrthoDB" id="112220at5052"/>
<dbReference type="PhylomeDB" id="B0XXU1"/>
<dbReference type="Proteomes" id="UP000001699">
    <property type="component" value="Unassembled WGS sequence"/>
</dbReference>
<dbReference type="GO" id="GO:0000139">
    <property type="term" value="C:Golgi membrane"/>
    <property type="evidence" value="ECO:0007669"/>
    <property type="project" value="UniProtKB-SubCell"/>
</dbReference>
<dbReference type="GO" id="GO:0016192">
    <property type="term" value="P:vesicle-mediated transport"/>
    <property type="evidence" value="ECO:0007669"/>
    <property type="project" value="TreeGrafter"/>
</dbReference>
<dbReference type="InterPro" id="IPR019365">
    <property type="entry name" value="TVP18/Ca-channel_flower"/>
</dbReference>
<dbReference type="PANTHER" id="PTHR13314">
    <property type="entry name" value="CALCIUM CHANNEL FLOWER HOMOLOG"/>
    <property type="match status" value="1"/>
</dbReference>
<dbReference type="PANTHER" id="PTHR13314:SF2">
    <property type="entry name" value="CALCIUM CHANNEL FLOWER HOMOLOG"/>
    <property type="match status" value="1"/>
</dbReference>
<dbReference type="Pfam" id="PF10233">
    <property type="entry name" value="Cg6151-P"/>
    <property type="match status" value="1"/>
</dbReference>
<dbReference type="SMART" id="SM01077">
    <property type="entry name" value="Cg6151-P"/>
    <property type="match status" value="1"/>
</dbReference>
<accession>B0XXU1</accession>
<sequence>MTLAEEFRSRNFSIYGQWTGVLCIILCIALGIANIFSFAVLRIIFSVLCLISGLILIFIEVPFLLRICPTSSKFDAFIRRFTTNWMRAAMYGVMSVVQWLSLLPGSGASSLIVAAVFLLIASIFYALAGLKSQEFVGSKTLGGQGLVQMIV</sequence>
<feature type="chain" id="PRO_0000343012" description="Golgi apparatus membrane protein tvp18">
    <location>
        <begin position="1"/>
        <end position="151"/>
    </location>
</feature>
<feature type="transmembrane region" description="Helical" evidence="2">
    <location>
        <begin position="21"/>
        <end position="41"/>
    </location>
</feature>
<feature type="transmembrane region" description="Helical" evidence="2">
    <location>
        <begin position="43"/>
        <end position="63"/>
    </location>
</feature>
<feature type="transmembrane region" description="Helical" evidence="2">
    <location>
        <begin position="88"/>
        <end position="108"/>
    </location>
</feature>
<feature type="transmembrane region" description="Helical" evidence="2">
    <location>
        <begin position="110"/>
        <end position="130"/>
    </location>
</feature>
<feature type="glycosylation site" description="N-linked (GlcNAc...) asparagine" evidence="2">
    <location>
        <position position="11"/>
    </location>
</feature>
<organism>
    <name type="scientific">Aspergillus fumigatus (strain CBS 144.89 / FGSC A1163 / CEA10)</name>
    <name type="common">Neosartorya fumigata</name>
    <dbReference type="NCBI Taxonomy" id="451804"/>
    <lineage>
        <taxon>Eukaryota</taxon>
        <taxon>Fungi</taxon>
        <taxon>Dikarya</taxon>
        <taxon>Ascomycota</taxon>
        <taxon>Pezizomycotina</taxon>
        <taxon>Eurotiomycetes</taxon>
        <taxon>Eurotiomycetidae</taxon>
        <taxon>Eurotiales</taxon>
        <taxon>Aspergillaceae</taxon>
        <taxon>Aspergillus</taxon>
        <taxon>Aspergillus subgen. Fumigati</taxon>
    </lineage>
</organism>
<gene>
    <name type="primary">tvp18</name>
    <name type="ORF">AFUB_038560</name>
</gene>
<name>TVP18_ASPFC</name>
<reference key="1">
    <citation type="journal article" date="2008" name="PLoS Genet.">
        <title>Genomic islands in the pathogenic filamentous fungus Aspergillus fumigatus.</title>
        <authorList>
            <person name="Fedorova N.D."/>
            <person name="Khaldi N."/>
            <person name="Joardar V.S."/>
            <person name="Maiti R."/>
            <person name="Amedeo P."/>
            <person name="Anderson M.J."/>
            <person name="Crabtree J."/>
            <person name="Silva J.C."/>
            <person name="Badger J.H."/>
            <person name="Albarraq A."/>
            <person name="Angiuoli S."/>
            <person name="Bussey H."/>
            <person name="Bowyer P."/>
            <person name="Cotty P.J."/>
            <person name="Dyer P.S."/>
            <person name="Egan A."/>
            <person name="Galens K."/>
            <person name="Fraser-Liggett C.M."/>
            <person name="Haas B.J."/>
            <person name="Inman J.M."/>
            <person name="Kent R."/>
            <person name="Lemieux S."/>
            <person name="Malavazi I."/>
            <person name="Orvis J."/>
            <person name="Roemer T."/>
            <person name="Ronning C.M."/>
            <person name="Sundaram J.P."/>
            <person name="Sutton G."/>
            <person name="Turner G."/>
            <person name="Venter J.C."/>
            <person name="White O.R."/>
            <person name="Whitty B.R."/>
            <person name="Youngman P."/>
            <person name="Wolfe K.H."/>
            <person name="Goldman G.H."/>
            <person name="Wortman J.R."/>
            <person name="Jiang B."/>
            <person name="Denning D.W."/>
            <person name="Nierman W.C."/>
        </authorList>
    </citation>
    <scope>NUCLEOTIDE SEQUENCE [LARGE SCALE GENOMIC DNA]</scope>
    <source>
        <strain>CBS 144.89 / FGSC A1163 / CEA10</strain>
    </source>
</reference>
<keyword id="KW-0325">Glycoprotein</keyword>
<keyword id="KW-0333">Golgi apparatus</keyword>
<keyword id="KW-0472">Membrane</keyword>
<keyword id="KW-0812">Transmembrane</keyword>
<keyword id="KW-1133">Transmembrane helix</keyword>
<comment type="function">
    <text evidence="1">Golgi membrane protein involved in vesicular trafficking.</text>
</comment>
<comment type="subcellular location">
    <subcellularLocation>
        <location evidence="1">Golgi apparatus membrane</location>
        <topology evidence="1">Multi-pass membrane protein</topology>
    </subcellularLocation>
</comment>
<comment type="similarity">
    <text evidence="3">Belongs to the TVP18 family.</text>
</comment>
<protein>
    <recommendedName>
        <fullName>Golgi apparatus membrane protein tvp18</fullName>
    </recommendedName>
</protein>
<proteinExistence type="inferred from homology"/>